<organism>
    <name type="scientific">Archimandrita tessellata</name>
    <name type="common">Peppered roach</name>
    <name type="synonym">Giant cockroach</name>
    <dbReference type="NCBI Taxonomy" id="36945"/>
    <lineage>
        <taxon>Eukaryota</taxon>
        <taxon>Metazoa</taxon>
        <taxon>Ecdysozoa</taxon>
        <taxon>Arthropoda</taxon>
        <taxon>Hexapoda</taxon>
        <taxon>Insecta</taxon>
        <taxon>Pterygota</taxon>
        <taxon>Neoptera</taxon>
        <taxon>Polyneoptera</taxon>
        <taxon>Dictyoptera</taxon>
        <taxon>Blattodea</taxon>
        <taxon>Blaberoidea</taxon>
        <taxon>Blaberidae</taxon>
        <taxon>Blaberinae</taxon>
        <taxon>Archimandrita</taxon>
    </lineage>
</organism>
<sequence length="11" mass="1103">GSSGLISMPRV</sequence>
<comment type="function">
    <text evidence="4">Mediates visceral muscle contractile activity (myotropic activity).</text>
</comment>
<comment type="subcellular location">
    <subcellularLocation>
        <location evidence="4">Secreted</location>
    </subcellularLocation>
</comment>
<comment type="similarity">
    <text evidence="1">Belongs to the periviscerokinin family.</text>
</comment>
<keyword id="KW-0027">Amidation</keyword>
<keyword id="KW-0903">Direct protein sequencing</keyword>
<keyword id="KW-0527">Neuropeptide</keyword>
<keyword id="KW-0964">Secreted</keyword>
<name>PVK2_ARCTE</name>
<accession>P85536</accession>
<protein>
    <recommendedName>
        <fullName evidence="3">Periviscerokinin-2</fullName>
        <shortName evidence="3">ArcTe-PVK-2</shortName>
    </recommendedName>
</protein>
<dbReference type="GO" id="GO:0005576">
    <property type="term" value="C:extracellular region"/>
    <property type="evidence" value="ECO:0007669"/>
    <property type="project" value="UniProtKB-SubCell"/>
</dbReference>
<dbReference type="GO" id="GO:0007218">
    <property type="term" value="P:neuropeptide signaling pathway"/>
    <property type="evidence" value="ECO:0007669"/>
    <property type="project" value="UniProtKB-KW"/>
</dbReference>
<dbReference type="InterPro" id="IPR013231">
    <property type="entry name" value="Periviscerokinin"/>
</dbReference>
<dbReference type="Pfam" id="PF08259">
    <property type="entry name" value="Periviscerokin"/>
    <property type="match status" value="1"/>
</dbReference>
<reference evidence="4" key="1">
    <citation type="journal article" date="2009" name="BMC Evol. Biol.">
        <title>A proteomic approach for studying insect phylogeny: CAPA peptides of ancient insect taxa (Dictyoptera, Blattoptera) as a test case.</title>
        <authorList>
            <person name="Roth S."/>
            <person name="Fromm B."/>
            <person name="Gaede G."/>
            <person name="Predel R."/>
        </authorList>
    </citation>
    <scope>PROTEIN SEQUENCE</scope>
    <scope>AMIDATION AT VAL-11</scope>
    <source>
        <tissue evidence="2">Abdominal perisympathetic organs</tissue>
    </source>
</reference>
<evidence type="ECO:0000255" key="1"/>
<evidence type="ECO:0000269" key="2">
    <source>
    </source>
</evidence>
<evidence type="ECO:0000303" key="3">
    <source>
    </source>
</evidence>
<evidence type="ECO:0000305" key="4"/>
<proteinExistence type="evidence at protein level"/>
<feature type="peptide" id="PRO_0000378774" description="Periviscerokinin-2" evidence="2">
    <location>
        <begin position="1"/>
        <end position="11"/>
    </location>
</feature>
<feature type="modified residue" description="Valine amide" evidence="2">
    <location>
        <position position="11"/>
    </location>
</feature>